<keyword id="KW-1003">Cell membrane</keyword>
<keyword id="KW-0472">Membrane</keyword>
<keyword id="KW-1185">Reference proteome</keyword>
<keyword id="KW-0762">Sugar transport</keyword>
<keyword id="KW-0812">Transmembrane</keyword>
<keyword id="KW-1133">Transmembrane helix</keyword>
<keyword id="KW-0813">Transport</keyword>
<proteinExistence type="evidence at protein level"/>
<dbReference type="EMBL" id="AE006641">
    <property type="protein sequence ID" value="AAK42958.1"/>
    <property type="molecule type" value="Genomic_DNA"/>
</dbReference>
<dbReference type="PIR" id="G90462">
    <property type="entry name" value="G90462"/>
</dbReference>
<dbReference type="RefSeq" id="WP_010923999.1">
    <property type="nucleotide sequence ID" value="NC_002754.1"/>
</dbReference>
<dbReference type="SMR" id="Q97UZ0"/>
<dbReference type="FunCoup" id="Q97UZ0">
    <property type="interactions" value="30"/>
</dbReference>
<dbReference type="STRING" id="273057.SSO2848"/>
<dbReference type="TCDB" id="3.A.1.1.13">
    <property type="family name" value="the atp-binding cassette (abc) superfamily"/>
</dbReference>
<dbReference type="PaxDb" id="273057-SSO2848"/>
<dbReference type="EnsemblBacteria" id="AAK42958">
    <property type="protein sequence ID" value="AAK42958"/>
    <property type="gene ID" value="SSO2848"/>
</dbReference>
<dbReference type="GeneID" id="1452877"/>
<dbReference type="GeneID" id="27429114"/>
<dbReference type="KEGG" id="sso:SSO2848"/>
<dbReference type="PATRIC" id="fig|273057.12.peg.2934"/>
<dbReference type="eggNOG" id="arCOG00157">
    <property type="taxonomic scope" value="Archaea"/>
</dbReference>
<dbReference type="HOGENOM" id="CLU_016047_0_0_2"/>
<dbReference type="InParanoid" id="Q97UZ0"/>
<dbReference type="PhylomeDB" id="Q97UZ0"/>
<dbReference type="Proteomes" id="UP000001974">
    <property type="component" value="Chromosome"/>
</dbReference>
<dbReference type="GO" id="GO:0005886">
    <property type="term" value="C:plasma membrane"/>
    <property type="evidence" value="ECO:0007669"/>
    <property type="project" value="UniProtKB-SubCell"/>
</dbReference>
<dbReference type="GO" id="GO:0055085">
    <property type="term" value="P:transmembrane transport"/>
    <property type="evidence" value="ECO:0007669"/>
    <property type="project" value="InterPro"/>
</dbReference>
<dbReference type="CDD" id="cd06261">
    <property type="entry name" value="TM_PBP2"/>
    <property type="match status" value="1"/>
</dbReference>
<dbReference type="Gene3D" id="1.10.3720.10">
    <property type="entry name" value="MetI-like"/>
    <property type="match status" value="1"/>
</dbReference>
<dbReference type="InterPro" id="IPR054947">
    <property type="entry name" value="GlcT_permease"/>
</dbReference>
<dbReference type="InterPro" id="IPR000515">
    <property type="entry name" value="MetI-like"/>
</dbReference>
<dbReference type="InterPro" id="IPR035906">
    <property type="entry name" value="MetI-like_sf"/>
</dbReference>
<dbReference type="InterPro" id="IPR052730">
    <property type="entry name" value="Sugar_ABC_transporter"/>
</dbReference>
<dbReference type="NCBIfam" id="NF040931">
    <property type="entry name" value="ABC_arch_GlcT"/>
    <property type="match status" value="1"/>
</dbReference>
<dbReference type="PANTHER" id="PTHR43759:SF1">
    <property type="entry name" value="GLUCOSE IMPORT SYSTEM PERMEASE PROTEIN GLCT"/>
    <property type="match status" value="1"/>
</dbReference>
<dbReference type="PANTHER" id="PTHR43759">
    <property type="entry name" value="TREHALOSE TRANSPORT SYSTEM PERMEASE PROTEIN SUGA"/>
    <property type="match status" value="1"/>
</dbReference>
<dbReference type="Pfam" id="PF00528">
    <property type="entry name" value="BPD_transp_1"/>
    <property type="match status" value="1"/>
</dbReference>
<dbReference type="SUPFAM" id="SSF161098">
    <property type="entry name" value="MetI-like"/>
    <property type="match status" value="1"/>
</dbReference>
<dbReference type="PROSITE" id="PS50928">
    <property type="entry name" value="ABC_TM1"/>
    <property type="match status" value="1"/>
</dbReference>
<name>GLCT_SACS2</name>
<sequence>MMKKGTIILVAPTAIFSAILLYLVIWNAVMSFMNWSLLNSKPTFVGLETYSIVIRTFQFTNSLLHSIELSVILVVIGNILGIFIAALLYFLNSNKARSTFLSIVIYPLSISMAVNGLIWLWLFNIHIGVDWLLVRIGLPQFPWLSSTSTMFPSLVLVSVWAYTGIAALFYLAGFMNIDKTIVEAARLDGTSAFKILYKILIPNSLNSFIIATALLFLFSFRIFDLPYVLSGGTTNIFLQTSELYMYYLFTVEYFSQATAVATMITLIATIIIIPYALTVIRRWIRR</sequence>
<accession>Q97UZ0</accession>
<evidence type="ECO:0000255" key="1"/>
<evidence type="ECO:0000255" key="2">
    <source>
        <dbReference type="PROSITE-ProRule" id="PRU00441"/>
    </source>
</evidence>
<evidence type="ECO:0000303" key="3">
    <source>
    </source>
</evidence>
<evidence type="ECO:0000305" key="4"/>
<evidence type="ECO:0000305" key="5">
    <source>
    </source>
</evidence>
<evidence type="ECO:0000305" key="6">
    <source>
    </source>
</evidence>
<evidence type="ECO:0000312" key="7">
    <source>
        <dbReference type="EMBL" id="AAK42958.1"/>
    </source>
</evidence>
<comment type="function">
    <text evidence="5 6">Part of the ABC transporter complex GlcSTUV involved in glucose uptake. Responsible for the translocation of the substrate across the membrane.</text>
</comment>
<comment type="subunit">
    <text evidence="5">The complex is composed of two ATP-binding proteins (GlcV), two transmembrane proteins (GlcT and GlcU) and a solute-binding protein (GlcS).</text>
</comment>
<comment type="subcellular location">
    <subcellularLocation>
        <location evidence="4">Cell membrane</location>
        <topology evidence="1">Multi-pass membrane protein</topology>
    </subcellularLocation>
</comment>
<comment type="similarity">
    <text evidence="4">Belongs to the binding-protein-dependent transport system permease family.</text>
</comment>
<protein>
    <recommendedName>
        <fullName evidence="4">Glucose import system permease protein GlcT</fullName>
    </recommendedName>
</protein>
<reference key="1">
    <citation type="journal article" date="2001" name="Proc. Natl. Acad. Sci. U.S.A.">
        <title>The complete genome of the crenarchaeon Sulfolobus solfataricus P2.</title>
        <authorList>
            <person name="She Q."/>
            <person name="Singh R.K."/>
            <person name="Confalonieri F."/>
            <person name="Zivanovic Y."/>
            <person name="Allard G."/>
            <person name="Awayez M.J."/>
            <person name="Chan-Weiher C.C.-Y."/>
            <person name="Clausen I.G."/>
            <person name="Curtis B.A."/>
            <person name="De Moors A."/>
            <person name="Erauso G."/>
            <person name="Fletcher C."/>
            <person name="Gordon P.M.K."/>
            <person name="Heikamp-de Jong I."/>
            <person name="Jeffries A.C."/>
            <person name="Kozera C.J."/>
            <person name="Medina N."/>
            <person name="Peng X."/>
            <person name="Thi-Ngoc H.P."/>
            <person name="Redder P."/>
            <person name="Schenk M.E."/>
            <person name="Theriault C."/>
            <person name="Tolstrup N."/>
            <person name="Charlebois R.L."/>
            <person name="Doolittle W.F."/>
            <person name="Duguet M."/>
            <person name="Gaasterland T."/>
            <person name="Garrett R.A."/>
            <person name="Ragan M.A."/>
            <person name="Sensen C.W."/>
            <person name="Van der Oost J."/>
        </authorList>
    </citation>
    <scope>NUCLEOTIDE SEQUENCE [LARGE SCALE GENOMIC DNA]</scope>
    <source>
        <strain>ATCC 35092 / DSM 1617 / JCM 11322 / P2</strain>
    </source>
</reference>
<reference key="2">
    <citation type="journal article" date="1999" name="J. Bacteriol.">
        <title>Glucose transport in the extremely thermoacidophilic Sulfolobus solfataricus involves a high-affinity membrane-integrated binding protein.</title>
        <authorList>
            <person name="Albers S.V."/>
            <person name="Elferink M.G."/>
            <person name="Charlebois R.L."/>
            <person name="Sensen C.W."/>
            <person name="Driessen A.J."/>
            <person name="Konings W.N."/>
        </authorList>
    </citation>
    <scope>FUNCTION</scope>
    <scope>SUBUNIT</scope>
</reference>
<reference key="3">
    <citation type="journal article" date="2001" name="Mol. Microbiol.">
        <title>Sugar transport in Sulfolobus solfataricus is mediated by two families of binding protein-dependent ABC transporters.</title>
        <authorList>
            <person name="Elferink M.G."/>
            <person name="Albers S.V."/>
            <person name="Konings W.N."/>
            <person name="Driessen A.J."/>
        </authorList>
    </citation>
    <scope>NOMENCLATURE</scope>
    <scope>FUNCTION</scope>
</reference>
<organism>
    <name type="scientific">Saccharolobus solfataricus (strain ATCC 35092 / DSM 1617 / JCM 11322 / P2)</name>
    <name type="common">Sulfolobus solfataricus</name>
    <dbReference type="NCBI Taxonomy" id="273057"/>
    <lineage>
        <taxon>Archaea</taxon>
        <taxon>Thermoproteota</taxon>
        <taxon>Thermoprotei</taxon>
        <taxon>Sulfolobales</taxon>
        <taxon>Sulfolobaceae</taxon>
        <taxon>Saccharolobus</taxon>
    </lineage>
</organism>
<feature type="chain" id="PRO_0000447613" description="Glucose import system permease protein GlcT">
    <location>
        <begin position="1"/>
        <end position="286"/>
    </location>
</feature>
<feature type="transmembrane region" description="Helical" evidence="1">
    <location>
        <begin position="6"/>
        <end position="26"/>
    </location>
</feature>
<feature type="transmembrane region" description="Helical" evidence="1">
    <location>
        <begin position="71"/>
        <end position="91"/>
    </location>
</feature>
<feature type="transmembrane region" description="Helical" evidence="1">
    <location>
        <begin position="103"/>
        <end position="123"/>
    </location>
</feature>
<feature type="transmembrane region" description="Helical" evidence="1">
    <location>
        <begin position="154"/>
        <end position="174"/>
    </location>
</feature>
<feature type="transmembrane region" description="Helical" evidence="1">
    <location>
        <begin position="199"/>
        <end position="219"/>
    </location>
</feature>
<feature type="transmembrane region" description="Helical" evidence="1">
    <location>
        <begin position="260"/>
        <end position="280"/>
    </location>
</feature>
<feature type="domain" description="ABC transmembrane type-1" evidence="2">
    <location>
        <begin position="63"/>
        <end position="275"/>
    </location>
</feature>
<gene>
    <name evidence="3" type="primary">glcT</name>
    <name evidence="7" type="ordered locus">SSO2848</name>
</gene>